<evidence type="ECO:0000255" key="1">
    <source>
        <dbReference type="HAMAP-Rule" id="MF_01177"/>
    </source>
</evidence>
<feature type="chain" id="PRO_0000268953" description="HTH-type transcriptional repressor NsrR">
    <location>
        <begin position="1"/>
        <end position="141"/>
    </location>
</feature>
<feature type="domain" description="HTH rrf2-type" evidence="1">
    <location>
        <begin position="2"/>
        <end position="129"/>
    </location>
</feature>
<feature type="DNA-binding region" description="H-T-H motif" evidence="1">
    <location>
        <begin position="28"/>
        <end position="51"/>
    </location>
</feature>
<feature type="binding site" evidence="1">
    <location>
        <position position="91"/>
    </location>
    <ligand>
        <name>[2Fe-2S] cluster</name>
        <dbReference type="ChEBI" id="CHEBI:190135"/>
    </ligand>
</feature>
<feature type="binding site" evidence="1">
    <location>
        <position position="96"/>
    </location>
    <ligand>
        <name>[2Fe-2S] cluster</name>
        <dbReference type="ChEBI" id="CHEBI:190135"/>
    </ligand>
</feature>
<feature type="binding site" evidence="1">
    <location>
        <position position="102"/>
    </location>
    <ligand>
        <name>[2Fe-2S] cluster</name>
        <dbReference type="ChEBI" id="CHEBI:190135"/>
    </ligand>
</feature>
<reference key="1">
    <citation type="journal article" date="2003" name="Genome Res.">
        <title>Comparative genome analysis of Vibrio vulnificus, a marine pathogen.</title>
        <authorList>
            <person name="Chen C.-Y."/>
            <person name="Wu K.-M."/>
            <person name="Chang Y.-C."/>
            <person name="Chang C.-H."/>
            <person name="Tsai H.-C."/>
            <person name="Liao T.-L."/>
            <person name="Liu Y.-M."/>
            <person name="Chen H.-J."/>
            <person name="Shen A.B.-T."/>
            <person name="Li J.-C."/>
            <person name="Su T.-L."/>
            <person name="Shao C.-P."/>
            <person name="Lee C.-T."/>
            <person name="Hor L.-I."/>
            <person name="Tsai S.-F."/>
        </authorList>
    </citation>
    <scope>NUCLEOTIDE SEQUENCE [LARGE SCALE GENOMIC DNA]</scope>
    <source>
        <strain>YJ016</strain>
    </source>
</reference>
<dbReference type="EMBL" id="BA000037">
    <property type="protein sequence ID" value="BAC95827.1"/>
    <property type="molecule type" value="Genomic_DNA"/>
</dbReference>
<dbReference type="RefSeq" id="WP_011079284.1">
    <property type="nucleotide sequence ID" value="NC_005139.1"/>
</dbReference>
<dbReference type="SMR" id="Q7MH10"/>
<dbReference type="STRING" id="672.VV93_v1c27910"/>
<dbReference type="KEGG" id="vvy:VV3063"/>
<dbReference type="eggNOG" id="COG1959">
    <property type="taxonomic scope" value="Bacteria"/>
</dbReference>
<dbReference type="HOGENOM" id="CLU_107144_2_1_6"/>
<dbReference type="Proteomes" id="UP000002675">
    <property type="component" value="Chromosome I"/>
</dbReference>
<dbReference type="GO" id="GO:0005829">
    <property type="term" value="C:cytosol"/>
    <property type="evidence" value="ECO:0007669"/>
    <property type="project" value="TreeGrafter"/>
</dbReference>
<dbReference type="GO" id="GO:0051537">
    <property type="term" value="F:2 iron, 2 sulfur cluster binding"/>
    <property type="evidence" value="ECO:0007669"/>
    <property type="project" value="UniProtKB-KW"/>
</dbReference>
<dbReference type="GO" id="GO:0003700">
    <property type="term" value="F:DNA-binding transcription factor activity"/>
    <property type="evidence" value="ECO:0007669"/>
    <property type="project" value="UniProtKB-UniRule"/>
</dbReference>
<dbReference type="GO" id="GO:0003690">
    <property type="term" value="F:double-stranded DNA binding"/>
    <property type="evidence" value="ECO:0007669"/>
    <property type="project" value="UniProtKB-UniRule"/>
</dbReference>
<dbReference type="GO" id="GO:0005506">
    <property type="term" value="F:iron ion binding"/>
    <property type="evidence" value="ECO:0007669"/>
    <property type="project" value="UniProtKB-UniRule"/>
</dbReference>
<dbReference type="GO" id="GO:0045892">
    <property type="term" value="P:negative regulation of DNA-templated transcription"/>
    <property type="evidence" value="ECO:0007669"/>
    <property type="project" value="InterPro"/>
</dbReference>
<dbReference type="FunFam" id="1.10.10.10:FF:000105">
    <property type="entry name" value="HTH-type transcriptional repressor NsrR"/>
    <property type="match status" value="1"/>
</dbReference>
<dbReference type="Gene3D" id="1.10.10.10">
    <property type="entry name" value="Winged helix-like DNA-binding domain superfamily/Winged helix DNA-binding domain"/>
    <property type="match status" value="1"/>
</dbReference>
<dbReference type="HAMAP" id="MF_01177">
    <property type="entry name" value="HTH_type_NsrR"/>
    <property type="match status" value="1"/>
</dbReference>
<dbReference type="InterPro" id="IPR000944">
    <property type="entry name" value="Tscrpt_reg_Rrf2"/>
</dbReference>
<dbReference type="InterPro" id="IPR023761">
    <property type="entry name" value="Tscrpt_rep_HTH_NsrR"/>
</dbReference>
<dbReference type="InterPro" id="IPR036388">
    <property type="entry name" value="WH-like_DNA-bd_sf"/>
</dbReference>
<dbReference type="InterPro" id="IPR036390">
    <property type="entry name" value="WH_DNA-bd_sf"/>
</dbReference>
<dbReference type="NCBIfam" id="NF008240">
    <property type="entry name" value="PRK11014.1"/>
    <property type="match status" value="1"/>
</dbReference>
<dbReference type="NCBIfam" id="TIGR00738">
    <property type="entry name" value="rrf2_super"/>
    <property type="match status" value="1"/>
</dbReference>
<dbReference type="PANTHER" id="PTHR33221:SF4">
    <property type="entry name" value="HTH-TYPE TRANSCRIPTIONAL REPRESSOR NSRR"/>
    <property type="match status" value="1"/>
</dbReference>
<dbReference type="PANTHER" id="PTHR33221">
    <property type="entry name" value="WINGED HELIX-TURN-HELIX TRANSCRIPTIONAL REGULATOR, RRF2 FAMILY"/>
    <property type="match status" value="1"/>
</dbReference>
<dbReference type="Pfam" id="PF02082">
    <property type="entry name" value="Rrf2"/>
    <property type="match status" value="1"/>
</dbReference>
<dbReference type="SUPFAM" id="SSF46785">
    <property type="entry name" value="Winged helix' DNA-binding domain"/>
    <property type="match status" value="1"/>
</dbReference>
<dbReference type="PROSITE" id="PS51197">
    <property type="entry name" value="HTH_RRF2_2"/>
    <property type="match status" value="1"/>
</dbReference>
<organism>
    <name type="scientific">Vibrio vulnificus (strain YJ016)</name>
    <dbReference type="NCBI Taxonomy" id="196600"/>
    <lineage>
        <taxon>Bacteria</taxon>
        <taxon>Pseudomonadati</taxon>
        <taxon>Pseudomonadota</taxon>
        <taxon>Gammaproteobacteria</taxon>
        <taxon>Vibrionales</taxon>
        <taxon>Vibrionaceae</taxon>
        <taxon>Vibrio</taxon>
    </lineage>
</organism>
<gene>
    <name evidence="1" type="primary">nsrR</name>
    <name type="ordered locus">VV3063</name>
</gene>
<comment type="function">
    <text evidence="1">Nitric oxide-sensitive repressor of genes involved in protecting the cell against nitrosative stress. May require iron for activity.</text>
</comment>
<comment type="cofactor">
    <cofactor evidence="1">
        <name>[2Fe-2S] cluster</name>
        <dbReference type="ChEBI" id="CHEBI:190135"/>
    </cofactor>
    <text evidence="1">Binds 1 [2Fe-2S] cluster per subunit.</text>
</comment>
<accession>Q7MH10</accession>
<name>NSRR_VIBVY</name>
<sequence length="141" mass="15917">MQLTSFTDYALRTLIYLASLPDNEQTNITDVTELFGVSRNHMVKVINRLGQLNYIQTVRGKNGGIRLNRPAKTILVGEVVRDLEPLDLVNCSVEFCHITPACRLKERLYRAKLAFLAELDDCSIAELLDDNAELLILLQKA</sequence>
<protein>
    <recommendedName>
        <fullName evidence="1">HTH-type transcriptional repressor NsrR</fullName>
    </recommendedName>
</protein>
<keyword id="KW-0001">2Fe-2S</keyword>
<keyword id="KW-0238">DNA-binding</keyword>
<keyword id="KW-0408">Iron</keyword>
<keyword id="KW-0411">Iron-sulfur</keyword>
<keyword id="KW-0479">Metal-binding</keyword>
<keyword id="KW-0678">Repressor</keyword>
<keyword id="KW-0804">Transcription</keyword>
<keyword id="KW-0805">Transcription regulation</keyword>
<proteinExistence type="inferred from homology"/>